<proteinExistence type="inferred from homology"/>
<accession>Q1QFS7</accession>
<reference key="1">
    <citation type="submission" date="2006-03" db="EMBL/GenBank/DDBJ databases">
        <title>Complete sequence of plasmid 1 of Nitrobacter hamburgensis X14.</title>
        <authorList>
            <consortium name="US DOE Joint Genome Institute"/>
            <person name="Copeland A."/>
            <person name="Lucas S."/>
            <person name="Lapidus A."/>
            <person name="Barry K."/>
            <person name="Detter J.C."/>
            <person name="Glavina del Rio T."/>
            <person name="Hammon N."/>
            <person name="Israni S."/>
            <person name="Dalin E."/>
            <person name="Tice H."/>
            <person name="Pitluck S."/>
            <person name="Chain P."/>
            <person name="Malfatti S."/>
            <person name="Shin M."/>
            <person name="Vergez L."/>
            <person name="Schmutz J."/>
            <person name="Larimer F."/>
            <person name="Land M."/>
            <person name="Hauser L."/>
            <person name="Kyrpides N."/>
            <person name="Ivanova N."/>
            <person name="Ward B."/>
            <person name="Arp D."/>
            <person name="Klotz M."/>
            <person name="Stein L."/>
            <person name="O'Mullan G."/>
            <person name="Starkenburg S."/>
            <person name="Sayavedra L."/>
            <person name="Poret-Peterson A.T."/>
            <person name="Gentry M.E."/>
            <person name="Bruce D."/>
            <person name="Richardson P."/>
        </authorList>
    </citation>
    <scope>NUCLEOTIDE SEQUENCE [LARGE SCALE GENOMIC DNA]</scope>
    <source>
        <strain>DSM 10229 / NCIMB 13809 / X14</strain>
    </source>
</reference>
<gene>
    <name evidence="1" type="primary">dabA1</name>
    <name type="ordered locus">Nham_4323</name>
</gene>
<geneLocation type="plasmid">
    <name>pNITHX1</name>
</geneLocation>
<organism>
    <name type="scientific">Nitrobacter hamburgensis (strain DSM 10229 / NCIMB 13809 / X14)</name>
    <dbReference type="NCBI Taxonomy" id="323097"/>
    <lineage>
        <taxon>Bacteria</taxon>
        <taxon>Pseudomonadati</taxon>
        <taxon>Pseudomonadota</taxon>
        <taxon>Alphaproteobacteria</taxon>
        <taxon>Hyphomicrobiales</taxon>
        <taxon>Nitrobacteraceae</taxon>
        <taxon>Nitrobacter</taxon>
    </lineage>
</organism>
<dbReference type="EMBL" id="CP000320">
    <property type="protein sequence ID" value="ABE64920.1"/>
    <property type="molecule type" value="Genomic_DNA"/>
</dbReference>
<dbReference type="KEGG" id="nha:Nham_4323"/>
<dbReference type="HOGENOM" id="CLU_009885_0_0_5"/>
<dbReference type="OrthoDB" id="9805101at2"/>
<dbReference type="Proteomes" id="UP000001953">
    <property type="component" value="Plasmid pNITHX1"/>
</dbReference>
<dbReference type="GO" id="GO:0005886">
    <property type="term" value="C:plasma membrane"/>
    <property type="evidence" value="ECO:0007669"/>
    <property type="project" value="UniProtKB-SubCell"/>
</dbReference>
<dbReference type="GO" id="GO:0008270">
    <property type="term" value="F:zinc ion binding"/>
    <property type="evidence" value="ECO:0007669"/>
    <property type="project" value="UniProtKB-UniRule"/>
</dbReference>
<dbReference type="HAMAP" id="MF_01871">
    <property type="entry name" value="DabA"/>
    <property type="match status" value="1"/>
</dbReference>
<dbReference type="InterPro" id="IPR018752">
    <property type="entry name" value="DabA"/>
</dbReference>
<dbReference type="PANTHER" id="PTHR38344:SF1">
    <property type="entry name" value="INORGANIC CARBON TRANSPORTER SUBUNIT DABA-RELATED"/>
    <property type="match status" value="1"/>
</dbReference>
<dbReference type="PANTHER" id="PTHR38344">
    <property type="entry name" value="UPF0753 PROTEIN AQ_863"/>
    <property type="match status" value="1"/>
</dbReference>
<dbReference type="Pfam" id="PF10070">
    <property type="entry name" value="DabA"/>
    <property type="match status" value="1"/>
</dbReference>
<keyword id="KW-0997">Cell inner membrane</keyword>
<keyword id="KW-1003">Cell membrane</keyword>
<keyword id="KW-0472">Membrane</keyword>
<keyword id="KW-0479">Metal-binding</keyword>
<keyword id="KW-0614">Plasmid</keyword>
<keyword id="KW-1185">Reference proteome</keyword>
<keyword id="KW-0813">Transport</keyword>
<keyword id="KW-0862">Zinc</keyword>
<name>DABA1_NITHX</name>
<evidence type="ECO:0000255" key="1">
    <source>
        <dbReference type="HAMAP-Rule" id="MF_01871"/>
    </source>
</evidence>
<sequence length="1039" mass="117036">MVMVDALNLGRRLRVRSTAYVAGEPVPFFWPMRTFIHHNPLYGLEHMPFEQAVRRGAELFHARMFLPRSDYQRWQREGKVRQDTLAEEIARRAQALPAVPGIDWPRWLQALMQSAHDRDVVVPGVRAPDVHAALHGQPPSAQAVDVAVLLPALEQRLHGLTLPEAVDALWGTRLADELDELVIKSYLDFFDEDQSSWRMPGRERGLFAAWSEIARRNARMFLRGLHVRRTLGRVQDPESAVVHVMEEMGIDPDAWSAYFTRELTRLHGWTGFVRWRSSAKHYYWAQRYPAEVVDLLAVRLVVGLALLQESARHRRTPVRREQLDALLHERGAECLLRNALHSGEVLPDWAQRIDDTLSRGGSKRCEALLQRYWPLWQARQGQDQAAALRELAAAADATAALEVLSPEDIAGLIQGLQEFARQEGMVWTLAMEAQAIDQLLAQVQVPQDLAAGKRPFAQAWFCIDVRAEPIRRHLERVGDYQTFGIAGFFGVPVGFLGYGKGSESHFCPAVVTPKNLVLELPAELDPEEDDLLSTLGHVLHDLKSSVLSPYVTVEAVGMLFGLDLFGKTLAPLGYSRWRNRIDADKPVTRLLVDKLTREQADSIIRTLQRAMIVKALHAELHIERERVDDDMIRELRETALRHREGPTRLQRTFGVSDKQEAEFIDKLREVYRVDADYASYQLVRLGRIGYSLDEQVNYVHTALTMIGLTKTFSRFVLIVGHSGQTENNPYESALDCGACGGASGLVNARVLAQMANKTAVRERLRGMGIDIPDDTWFLPALHNTTTDAIELSDLVLLPPRHLVYLDRLRNGLRAASRLAAAERMPKLLPQARAIEPAQAWRLAHRLAVDWAQVRPEWGLSKNVYGIIGRRSLSERADLQGRPFLMSYDWRCDPKGRLLENLLAAAVVVGQWINLEHFFSTVDNARLGSGSKAYHNVAGRFGVMTGSLSDLRTGLPAQTVMREGQPYHEPMRMIALIEAPLDFAGRALQSVVKVKSLVLGGWIRAIVIDPTQGYKPFVFNNGQWEERPPLVAPAEEEHAA</sequence>
<comment type="function">
    <text evidence="1">Part of an energy-coupled inorganic carbon pump.</text>
</comment>
<comment type="cofactor">
    <cofactor evidence="1">
        <name>Zn(2+)</name>
        <dbReference type="ChEBI" id="CHEBI:29105"/>
    </cofactor>
</comment>
<comment type="subunit">
    <text evidence="1">Forms a complex with DabB.</text>
</comment>
<comment type="subcellular location">
    <subcellularLocation>
        <location evidence="1">Cell inner membrane</location>
        <topology evidence="1">Peripheral membrane protein</topology>
    </subcellularLocation>
</comment>
<comment type="similarity">
    <text evidence="1">Belongs to the inorganic carbon transporter (TC 9.A.2) DabA family.</text>
</comment>
<protein>
    <recommendedName>
        <fullName evidence="1">Probable inorganic carbon transporter subunit DabA 1</fullName>
    </recommendedName>
</protein>
<feature type="chain" id="PRO_0000387279" description="Probable inorganic carbon transporter subunit DabA 1">
    <location>
        <begin position="1"/>
        <end position="1039"/>
    </location>
</feature>
<feature type="binding site" evidence="1">
    <location>
        <position position="462"/>
    </location>
    <ligand>
        <name>Zn(2+)</name>
        <dbReference type="ChEBI" id="CHEBI:29105"/>
    </ligand>
</feature>
<feature type="binding site" evidence="1">
    <location>
        <position position="464"/>
    </location>
    <ligand>
        <name>Zn(2+)</name>
        <dbReference type="ChEBI" id="CHEBI:29105"/>
    </ligand>
</feature>
<feature type="binding site" evidence="1">
    <location>
        <position position="721"/>
    </location>
    <ligand>
        <name>Zn(2+)</name>
        <dbReference type="ChEBI" id="CHEBI:29105"/>
    </ligand>
</feature>
<feature type="binding site" evidence="1">
    <location>
        <position position="736"/>
    </location>
    <ligand>
        <name>Zn(2+)</name>
        <dbReference type="ChEBI" id="CHEBI:29105"/>
    </ligand>
</feature>